<dbReference type="EC" id="6.3.3.3" evidence="1"/>
<dbReference type="EMBL" id="CP000431">
    <property type="protein sequence ID" value="ABG92880.1"/>
    <property type="molecule type" value="Genomic_DNA"/>
</dbReference>
<dbReference type="RefSeq" id="WP_011594202.1">
    <property type="nucleotide sequence ID" value="NC_008268.1"/>
</dbReference>
<dbReference type="SMR" id="Q0SHV6"/>
<dbReference type="KEGG" id="rha:RHA1_ro01053"/>
<dbReference type="PATRIC" id="fig|101510.16.peg.1076"/>
<dbReference type="eggNOG" id="COG0132">
    <property type="taxonomic scope" value="Bacteria"/>
</dbReference>
<dbReference type="HOGENOM" id="CLU_072551_1_0_11"/>
<dbReference type="OrthoDB" id="9802610at2"/>
<dbReference type="UniPathway" id="UPA00078">
    <property type="reaction ID" value="UER00161"/>
</dbReference>
<dbReference type="Proteomes" id="UP000008710">
    <property type="component" value="Chromosome"/>
</dbReference>
<dbReference type="GO" id="GO:0005829">
    <property type="term" value="C:cytosol"/>
    <property type="evidence" value="ECO:0007669"/>
    <property type="project" value="TreeGrafter"/>
</dbReference>
<dbReference type="GO" id="GO:0005524">
    <property type="term" value="F:ATP binding"/>
    <property type="evidence" value="ECO:0007669"/>
    <property type="project" value="UniProtKB-UniRule"/>
</dbReference>
<dbReference type="GO" id="GO:0004141">
    <property type="term" value="F:dethiobiotin synthase activity"/>
    <property type="evidence" value="ECO:0007669"/>
    <property type="project" value="UniProtKB-UniRule"/>
</dbReference>
<dbReference type="GO" id="GO:0000287">
    <property type="term" value="F:magnesium ion binding"/>
    <property type="evidence" value="ECO:0007669"/>
    <property type="project" value="UniProtKB-UniRule"/>
</dbReference>
<dbReference type="GO" id="GO:0009102">
    <property type="term" value="P:biotin biosynthetic process"/>
    <property type="evidence" value="ECO:0007669"/>
    <property type="project" value="UniProtKB-UniRule"/>
</dbReference>
<dbReference type="CDD" id="cd03109">
    <property type="entry name" value="DTBS"/>
    <property type="match status" value="1"/>
</dbReference>
<dbReference type="Gene3D" id="3.40.50.300">
    <property type="entry name" value="P-loop containing nucleotide triphosphate hydrolases"/>
    <property type="match status" value="1"/>
</dbReference>
<dbReference type="HAMAP" id="MF_00336">
    <property type="entry name" value="BioD"/>
    <property type="match status" value="1"/>
</dbReference>
<dbReference type="InterPro" id="IPR004472">
    <property type="entry name" value="DTB_synth_BioD"/>
</dbReference>
<dbReference type="InterPro" id="IPR027417">
    <property type="entry name" value="P-loop_NTPase"/>
</dbReference>
<dbReference type="NCBIfam" id="TIGR00347">
    <property type="entry name" value="bioD"/>
    <property type="match status" value="1"/>
</dbReference>
<dbReference type="PANTHER" id="PTHR43210">
    <property type="entry name" value="DETHIOBIOTIN SYNTHETASE"/>
    <property type="match status" value="1"/>
</dbReference>
<dbReference type="PANTHER" id="PTHR43210:SF5">
    <property type="entry name" value="DETHIOBIOTIN SYNTHETASE"/>
    <property type="match status" value="1"/>
</dbReference>
<dbReference type="Pfam" id="PF13500">
    <property type="entry name" value="AAA_26"/>
    <property type="match status" value="1"/>
</dbReference>
<dbReference type="PIRSF" id="PIRSF006755">
    <property type="entry name" value="DTB_synth"/>
    <property type="match status" value="1"/>
</dbReference>
<dbReference type="SUPFAM" id="SSF52540">
    <property type="entry name" value="P-loop containing nucleoside triphosphate hydrolases"/>
    <property type="match status" value="1"/>
</dbReference>
<organism>
    <name type="scientific">Rhodococcus jostii (strain RHA1)</name>
    <dbReference type="NCBI Taxonomy" id="101510"/>
    <lineage>
        <taxon>Bacteria</taxon>
        <taxon>Bacillati</taxon>
        <taxon>Actinomycetota</taxon>
        <taxon>Actinomycetes</taxon>
        <taxon>Mycobacteriales</taxon>
        <taxon>Nocardiaceae</taxon>
        <taxon>Rhodococcus</taxon>
    </lineage>
</organism>
<protein>
    <recommendedName>
        <fullName evidence="1">ATP-dependent dethiobiotin synthetase BioD</fullName>
        <ecNumber evidence="1">6.3.3.3</ecNumber>
    </recommendedName>
    <alternativeName>
        <fullName evidence="1">DTB synthetase</fullName>
        <shortName evidence="1">DTBS</shortName>
    </alternativeName>
    <alternativeName>
        <fullName evidence="1">Dethiobiotin synthase</fullName>
    </alternativeName>
</protein>
<proteinExistence type="inferred from homology"/>
<name>BIOD_RHOJR</name>
<accession>Q0SHV6</accession>
<sequence length="231" mass="23047">MSILVVTGTSTDVGKTVVTAALAAAAREAGLSVAVCKPAQTGVAPGGPGDLAEVTRLSGVTAVVELARYPEPLAPDTAARRSGLPMLRCADVVETVRALDDGHDLVLVEGAGGLLVRLGAEGFTLVDLARALDAPAVVVAAAGLGTLNHTELTIRALSAAGLACAGTVIGSWPDEPGLAERCNLDDLPAVTGVDVVGSVPAGSGRLASASFGAAASTWFDSTWLKSTLTRL</sequence>
<evidence type="ECO:0000255" key="1">
    <source>
        <dbReference type="HAMAP-Rule" id="MF_00336"/>
    </source>
</evidence>
<keyword id="KW-0067">ATP-binding</keyword>
<keyword id="KW-0093">Biotin biosynthesis</keyword>
<keyword id="KW-0963">Cytoplasm</keyword>
<keyword id="KW-0436">Ligase</keyword>
<keyword id="KW-0460">Magnesium</keyword>
<keyword id="KW-0479">Metal-binding</keyword>
<keyword id="KW-0547">Nucleotide-binding</keyword>
<gene>
    <name evidence="1" type="primary">bioD</name>
    <name type="ordered locus">RHA1_ro01053</name>
</gene>
<feature type="chain" id="PRO_0000302542" description="ATP-dependent dethiobiotin synthetase BioD">
    <location>
        <begin position="1"/>
        <end position="231"/>
    </location>
</feature>
<feature type="active site" evidence="1">
    <location>
        <position position="37"/>
    </location>
</feature>
<feature type="binding site" evidence="1">
    <location>
        <begin position="12"/>
        <end position="17"/>
    </location>
    <ligand>
        <name>ATP</name>
        <dbReference type="ChEBI" id="CHEBI:30616"/>
    </ligand>
</feature>
<feature type="binding site" evidence="1">
    <location>
        <position position="16"/>
    </location>
    <ligand>
        <name>Mg(2+)</name>
        <dbReference type="ChEBI" id="CHEBI:18420"/>
    </ligand>
</feature>
<feature type="binding site" evidence="1">
    <location>
        <position position="41"/>
    </location>
    <ligand>
        <name>substrate</name>
    </ligand>
</feature>
<feature type="binding site" evidence="1">
    <location>
        <position position="50"/>
    </location>
    <ligand>
        <name>ATP</name>
        <dbReference type="ChEBI" id="CHEBI:30616"/>
    </ligand>
</feature>
<feature type="binding site" evidence="1">
    <location>
        <position position="50"/>
    </location>
    <ligand>
        <name>Mg(2+)</name>
        <dbReference type="ChEBI" id="CHEBI:18420"/>
    </ligand>
</feature>
<feature type="binding site" evidence="1">
    <location>
        <begin position="109"/>
        <end position="112"/>
    </location>
    <ligand>
        <name>ATP</name>
        <dbReference type="ChEBI" id="CHEBI:30616"/>
    </ligand>
</feature>
<feature type="binding site" evidence="1">
    <location>
        <position position="109"/>
    </location>
    <ligand>
        <name>Mg(2+)</name>
        <dbReference type="ChEBI" id="CHEBI:18420"/>
    </ligand>
</feature>
<feature type="binding site" evidence="1">
    <location>
        <begin position="170"/>
        <end position="171"/>
    </location>
    <ligand>
        <name>ATP</name>
        <dbReference type="ChEBI" id="CHEBI:30616"/>
    </ligand>
</feature>
<feature type="binding site" evidence="1">
    <location>
        <begin position="200"/>
        <end position="202"/>
    </location>
    <ligand>
        <name>ATP</name>
        <dbReference type="ChEBI" id="CHEBI:30616"/>
    </ligand>
</feature>
<reference key="1">
    <citation type="journal article" date="2006" name="Proc. Natl. Acad. Sci. U.S.A.">
        <title>The complete genome of Rhodococcus sp. RHA1 provides insights into a catabolic powerhouse.</title>
        <authorList>
            <person name="McLeod M.P."/>
            <person name="Warren R.L."/>
            <person name="Hsiao W.W.L."/>
            <person name="Araki N."/>
            <person name="Myhre M."/>
            <person name="Fernandes C."/>
            <person name="Miyazawa D."/>
            <person name="Wong W."/>
            <person name="Lillquist A.L."/>
            <person name="Wang D."/>
            <person name="Dosanjh M."/>
            <person name="Hara H."/>
            <person name="Petrescu A."/>
            <person name="Morin R.D."/>
            <person name="Yang G."/>
            <person name="Stott J.M."/>
            <person name="Schein J.E."/>
            <person name="Shin H."/>
            <person name="Smailus D."/>
            <person name="Siddiqui A.S."/>
            <person name="Marra M.A."/>
            <person name="Jones S.J.M."/>
            <person name="Holt R."/>
            <person name="Brinkman F.S.L."/>
            <person name="Miyauchi K."/>
            <person name="Fukuda M."/>
            <person name="Davies J.E."/>
            <person name="Mohn W.W."/>
            <person name="Eltis L.D."/>
        </authorList>
    </citation>
    <scope>NUCLEOTIDE SEQUENCE [LARGE SCALE GENOMIC DNA]</scope>
    <source>
        <strain>RHA1</strain>
    </source>
</reference>
<comment type="function">
    <text evidence="1">Catalyzes a mechanistically unusual reaction, the ATP-dependent insertion of CO2 between the N7 and N8 nitrogen atoms of 7,8-diaminopelargonic acid (DAPA, also called 7,8-diammoniononanoate) to form a ureido ring.</text>
</comment>
<comment type="catalytic activity">
    <reaction evidence="1">
        <text>(7R,8S)-7,8-diammoniononanoate + CO2 + ATP = (4R,5S)-dethiobiotin + ADP + phosphate + 3 H(+)</text>
        <dbReference type="Rhea" id="RHEA:15805"/>
        <dbReference type="ChEBI" id="CHEBI:15378"/>
        <dbReference type="ChEBI" id="CHEBI:16526"/>
        <dbReference type="ChEBI" id="CHEBI:30616"/>
        <dbReference type="ChEBI" id="CHEBI:43474"/>
        <dbReference type="ChEBI" id="CHEBI:149469"/>
        <dbReference type="ChEBI" id="CHEBI:149473"/>
        <dbReference type="ChEBI" id="CHEBI:456216"/>
        <dbReference type="EC" id="6.3.3.3"/>
    </reaction>
</comment>
<comment type="cofactor">
    <cofactor evidence="1">
        <name>Mg(2+)</name>
        <dbReference type="ChEBI" id="CHEBI:18420"/>
    </cofactor>
</comment>
<comment type="pathway">
    <text evidence="1">Cofactor biosynthesis; biotin biosynthesis; biotin from 7,8-diaminononanoate: step 1/2.</text>
</comment>
<comment type="subunit">
    <text evidence="1">Homodimer.</text>
</comment>
<comment type="subcellular location">
    <subcellularLocation>
        <location evidence="1">Cytoplasm</location>
    </subcellularLocation>
</comment>
<comment type="similarity">
    <text evidence="1">Belongs to the dethiobiotin synthetase family.</text>
</comment>